<evidence type="ECO:0000255" key="1">
    <source>
        <dbReference type="HAMAP-Rule" id="MF_01336"/>
    </source>
</evidence>
<evidence type="ECO:0000305" key="2"/>
<organism>
    <name type="scientific">Shewanella baltica (strain OS155 / ATCC BAA-1091)</name>
    <dbReference type="NCBI Taxonomy" id="325240"/>
    <lineage>
        <taxon>Bacteria</taxon>
        <taxon>Pseudomonadati</taxon>
        <taxon>Pseudomonadota</taxon>
        <taxon>Gammaproteobacteria</taxon>
        <taxon>Alteromonadales</taxon>
        <taxon>Shewanellaceae</taxon>
        <taxon>Shewanella</taxon>
    </lineage>
</organism>
<reference key="1">
    <citation type="submission" date="2007-02" db="EMBL/GenBank/DDBJ databases">
        <title>Complete sequence of chromosome of Shewanella baltica OS155.</title>
        <authorList>
            <consortium name="US DOE Joint Genome Institute"/>
            <person name="Copeland A."/>
            <person name="Lucas S."/>
            <person name="Lapidus A."/>
            <person name="Barry K."/>
            <person name="Detter J.C."/>
            <person name="Glavina del Rio T."/>
            <person name="Hammon N."/>
            <person name="Israni S."/>
            <person name="Dalin E."/>
            <person name="Tice H."/>
            <person name="Pitluck S."/>
            <person name="Sims D.R."/>
            <person name="Brettin T."/>
            <person name="Bruce D."/>
            <person name="Han C."/>
            <person name="Tapia R."/>
            <person name="Brainard J."/>
            <person name="Schmutz J."/>
            <person name="Larimer F."/>
            <person name="Land M."/>
            <person name="Hauser L."/>
            <person name="Kyrpides N."/>
            <person name="Mikhailova N."/>
            <person name="Brettar I."/>
            <person name="Klappenbach J."/>
            <person name="Konstantinidis K."/>
            <person name="Rodrigues J."/>
            <person name="Tiedje J."/>
            <person name="Richardson P."/>
        </authorList>
    </citation>
    <scope>NUCLEOTIDE SEQUENCE [LARGE SCALE GENOMIC DNA]</scope>
    <source>
        <strain>OS155 / ATCC BAA-1091</strain>
    </source>
</reference>
<dbReference type="EMBL" id="CP000563">
    <property type="protein sequence ID" value="ABN61407.1"/>
    <property type="molecule type" value="Genomic_DNA"/>
</dbReference>
<dbReference type="RefSeq" id="WP_006081398.1">
    <property type="nucleotide sequence ID" value="NC_009052.1"/>
</dbReference>
<dbReference type="SMR" id="A3D3U4"/>
<dbReference type="STRING" id="325240.Sbal_1901"/>
<dbReference type="GeneID" id="11772134"/>
<dbReference type="KEGG" id="sbl:Sbal_1901"/>
<dbReference type="HOGENOM" id="CLU_137946_0_0_6"/>
<dbReference type="OrthoDB" id="9806411at2"/>
<dbReference type="Proteomes" id="UP000001557">
    <property type="component" value="Chromosome"/>
</dbReference>
<dbReference type="GO" id="GO:0022625">
    <property type="term" value="C:cytosolic large ribosomal subunit"/>
    <property type="evidence" value="ECO:0007669"/>
    <property type="project" value="TreeGrafter"/>
</dbReference>
<dbReference type="GO" id="GO:0008097">
    <property type="term" value="F:5S rRNA binding"/>
    <property type="evidence" value="ECO:0007669"/>
    <property type="project" value="InterPro"/>
</dbReference>
<dbReference type="GO" id="GO:0003735">
    <property type="term" value="F:structural constituent of ribosome"/>
    <property type="evidence" value="ECO:0007669"/>
    <property type="project" value="InterPro"/>
</dbReference>
<dbReference type="GO" id="GO:0006412">
    <property type="term" value="P:translation"/>
    <property type="evidence" value="ECO:0007669"/>
    <property type="project" value="UniProtKB-UniRule"/>
</dbReference>
<dbReference type="CDD" id="cd00495">
    <property type="entry name" value="Ribosomal_L25_TL5_CTC"/>
    <property type="match status" value="1"/>
</dbReference>
<dbReference type="FunFam" id="2.40.240.10:FF:000002">
    <property type="entry name" value="50S ribosomal protein L25"/>
    <property type="match status" value="1"/>
</dbReference>
<dbReference type="Gene3D" id="2.40.240.10">
    <property type="entry name" value="Ribosomal Protein L25, Chain P"/>
    <property type="match status" value="1"/>
</dbReference>
<dbReference type="HAMAP" id="MF_01336">
    <property type="entry name" value="Ribosomal_bL25"/>
    <property type="match status" value="1"/>
</dbReference>
<dbReference type="InterPro" id="IPR020056">
    <property type="entry name" value="Rbsml_bL25/Gln-tRNA_synth_N"/>
</dbReference>
<dbReference type="InterPro" id="IPR011035">
    <property type="entry name" value="Ribosomal_bL25/Gln-tRNA_synth"/>
</dbReference>
<dbReference type="InterPro" id="IPR001021">
    <property type="entry name" value="Ribosomal_bL25_long"/>
</dbReference>
<dbReference type="InterPro" id="IPR020055">
    <property type="entry name" value="Ribosomal_bL25_short"/>
</dbReference>
<dbReference type="InterPro" id="IPR029751">
    <property type="entry name" value="Ribosomal_L25_dom"/>
</dbReference>
<dbReference type="InterPro" id="IPR020930">
    <property type="entry name" value="Ribosomal_uL5_bac-type"/>
</dbReference>
<dbReference type="NCBIfam" id="TIGR00731">
    <property type="entry name" value="bL25_bact_ctc"/>
    <property type="match status" value="1"/>
</dbReference>
<dbReference type="NCBIfam" id="NF004612">
    <property type="entry name" value="PRK05943.1"/>
    <property type="match status" value="1"/>
</dbReference>
<dbReference type="PANTHER" id="PTHR33284">
    <property type="entry name" value="RIBOSOMAL PROTEIN L25/GLN-TRNA SYNTHETASE, ANTI-CODON-BINDING DOMAIN-CONTAINING PROTEIN"/>
    <property type="match status" value="1"/>
</dbReference>
<dbReference type="PANTHER" id="PTHR33284:SF1">
    <property type="entry name" value="RIBOSOMAL PROTEIN L25_GLN-TRNA SYNTHETASE, ANTI-CODON-BINDING DOMAIN-CONTAINING PROTEIN"/>
    <property type="match status" value="1"/>
</dbReference>
<dbReference type="Pfam" id="PF01386">
    <property type="entry name" value="Ribosomal_L25p"/>
    <property type="match status" value="1"/>
</dbReference>
<dbReference type="SUPFAM" id="SSF50715">
    <property type="entry name" value="Ribosomal protein L25-like"/>
    <property type="match status" value="1"/>
</dbReference>
<name>RL25_SHEB5</name>
<accession>A3D3U4</accession>
<proteinExistence type="inferred from homology"/>
<feature type="chain" id="PRO_1000052962" description="Large ribosomal subunit protein bL25">
    <location>
        <begin position="1"/>
        <end position="95"/>
    </location>
</feature>
<protein>
    <recommendedName>
        <fullName evidence="1">Large ribosomal subunit protein bL25</fullName>
    </recommendedName>
    <alternativeName>
        <fullName evidence="2">50S ribosomal protein L25</fullName>
    </alternativeName>
</protein>
<keyword id="KW-1185">Reference proteome</keyword>
<keyword id="KW-0687">Ribonucleoprotein</keyword>
<keyword id="KW-0689">Ribosomal protein</keyword>
<keyword id="KW-0694">RNA-binding</keyword>
<keyword id="KW-0699">rRNA-binding</keyword>
<sequence>MSYTIQAQTRTEIGKGSSRRLRHAGKVPAVIYGQGKEPVSIVFDHKDIINIQANADFYTSTLTIVVDGKEVGVRAQAMQRHVFKPLIEHVDFVYA</sequence>
<comment type="function">
    <text evidence="1">This is one of the proteins that binds to the 5S RNA in the ribosome where it forms part of the central protuberance.</text>
</comment>
<comment type="subunit">
    <text evidence="1">Part of the 50S ribosomal subunit; part of the 5S rRNA/L5/L18/L25 subcomplex. Contacts the 5S rRNA. Binds to the 5S rRNA independently of L5 and L18.</text>
</comment>
<comment type="similarity">
    <text evidence="1">Belongs to the bacterial ribosomal protein bL25 family.</text>
</comment>
<gene>
    <name evidence="1" type="primary">rplY</name>
    <name type="ordered locus">Sbal_1901</name>
</gene>